<gene>
    <name evidence="1" type="primary">ndhC</name>
</gene>
<proteinExistence type="inferred from homology"/>
<evidence type="ECO:0000255" key="1">
    <source>
        <dbReference type="HAMAP-Rule" id="MF_01394"/>
    </source>
</evidence>
<geneLocation type="chloroplast"/>
<dbReference type="EC" id="7.1.1.-" evidence="1"/>
<dbReference type="EMBL" id="AJ506156">
    <property type="protein sequence ID" value="CAD45112.1"/>
    <property type="molecule type" value="Genomic_DNA"/>
</dbReference>
<dbReference type="RefSeq" id="NP_904104.1">
    <property type="nucleotide sequence ID" value="NC_005086.1"/>
</dbReference>
<dbReference type="SMR" id="Q70XZ8"/>
<dbReference type="STRING" id="13333.Q70XZ8"/>
<dbReference type="GeneID" id="2546565"/>
<dbReference type="KEGG" id="atr:2546565"/>
<dbReference type="eggNOG" id="KOG1687">
    <property type="taxonomic scope" value="Eukaryota"/>
</dbReference>
<dbReference type="OrthoDB" id="1852333at2759"/>
<dbReference type="Proteomes" id="UP000017836">
    <property type="component" value="Chloroplast"/>
</dbReference>
<dbReference type="GO" id="GO:0009535">
    <property type="term" value="C:chloroplast thylakoid membrane"/>
    <property type="evidence" value="ECO:0007669"/>
    <property type="project" value="UniProtKB-SubCell"/>
</dbReference>
<dbReference type="GO" id="GO:0030964">
    <property type="term" value="C:NADH dehydrogenase complex"/>
    <property type="evidence" value="ECO:0000318"/>
    <property type="project" value="GO_Central"/>
</dbReference>
<dbReference type="GO" id="GO:0008137">
    <property type="term" value="F:NADH dehydrogenase (ubiquinone) activity"/>
    <property type="evidence" value="ECO:0000318"/>
    <property type="project" value="GO_Central"/>
</dbReference>
<dbReference type="GO" id="GO:0048038">
    <property type="term" value="F:quinone binding"/>
    <property type="evidence" value="ECO:0007669"/>
    <property type="project" value="UniProtKB-KW"/>
</dbReference>
<dbReference type="GO" id="GO:0019684">
    <property type="term" value="P:photosynthesis, light reaction"/>
    <property type="evidence" value="ECO:0007669"/>
    <property type="project" value="UniProtKB-UniRule"/>
</dbReference>
<dbReference type="FunFam" id="1.20.58.1610:FF:000001">
    <property type="entry name" value="NAD(P)H-quinone oxidoreductase subunit 3, chloroplastic"/>
    <property type="match status" value="1"/>
</dbReference>
<dbReference type="Gene3D" id="1.20.58.1610">
    <property type="entry name" value="NADH:ubiquinone/plastoquinone oxidoreductase, chain 3"/>
    <property type="match status" value="1"/>
</dbReference>
<dbReference type="HAMAP" id="MF_01394">
    <property type="entry name" value="NDH1_NuoA"/>
    <property type="match status" value="1"/>
</dbReference>
<dbReference type="InterPro" id="IPR023043">
    <property type="entry name" value="NAD(P)H_OxRDtase_bac/plastid"/>
</dbReference>
<dbReference type="InterPro" id="IPR000440">
    <property type="entry name" value="NADH_UbQ/plastoQ_OxRdtase_su3"/>
</dbReference>
<dbReference type="InterPro" id="IPR038430">
    <property type="entry name" value="NDAH_ubi_oxred_su3_sf"/>
</dbReference>
<dbReference type="PANTHER" id="PTHR11058">
    <property type="entry name" value="NADH-UBIQUINONE OXIDOREDUCTASE CHAIN 3"/>
    <property type="match status" value="1"/>
</dbReference>
<dbReference type="PANTHER" id="PTHR11058:SF9">
    <property type="entry name" value="NADH-UBIQUINONE OXIDOREDUCTASE CHAIN 3"/>
    <property type="match status" value="1"/>
</dbReference>
<dbReference type="Pfam" id="PF00507">
    <property type="entry name" value="Oxidored_q4"/>
    <property type="match status" value="1"/>
</dbReference>
<name>NU3C_AMBTC</name>
<keyword id="KW-0150">Chloroplast</keyword>
<keyword id="KW-0472">Membrane</keyword>
<keyword id="KW-0520">NAD</keyword>
<keyword id="KW-0521">NADP</keyword>
<keyword id="KW-0934">Plastid</keyword>
<keyword id="KW-0618">Plastoquinone</keyword>
<keyword id="KW-0874">Quinone</keyword>
<keyword id="KW-1185">Reference proteome</keyword>
<keyword id="KW-0793">Thylakoid</keyword>
<keyword id="KW-1278">Translocase</keyword>
<keyword id="KW-0812">Transmembrane</keyword>
<keyword id="KW-1133">Transmembrane helix</keyword>
<keyword id="KW-0813">Transport</keyword>
<accession>Q70XZ8</accession>
<protein>
    <recommendedName>
        <fullName evidence="1">NAD(P)H-quinone oxidoreductase subunit 3, chloroplastic</fullName>
        <ecNumber evidence="1">7.1.1.-</ecNumber>
    </recommendedName>
    <alternativeName>
        <fullName evidence="1">NAD(P)H dehydrogenase subunit 3</fullName>
    </alternativeName>
    <alternativeName>
        <fullName evidence="1">NADH-plastoquinone oxidoreductase subunit 3</fullName>
    </alternativeName>
</protein>
<reference key="1">
    <citation type="journal article" date="2003" name="Mol. Biol. Evol.">
        <title>Analysis of the Amborella trichopoda chloroplast genome sequence suggests that Amborella is not a basal angiosperm.</title>
        <authorList>
            <person name="Goremykin V.V."/>
            <person name="Hirsch-Ernst K.I."/>
            <person name="Wolfl S."/>
            <person name="Hellwig F.H."/>
        </authorList>
    </citation>
    <scope>NUCLEOTIDE SEQUENCE [LARGE SCALE GENOMIC DNA]</scope>
</reference>
<comment type="function">
    <text evidence="1">NDH shuttles electrons from NAD(P)H:plastoquinone, via FMN and iron-sulfur (Fe-S) centers, to quinones in the photosynthetic chain and possibly in a chloroplast respiratory chain. The immediate electron acceptor for the enzyme in this species is believed to be plastoquinone. Couples the redox reaction to proton translocation, and thus conserves the redox energy in a proton gradient.</text>
</comment>
<comment type="catalytic activity">
    <reaction evidence="1">
        <text>a plastoquinone + NADH + (n+1) H(+)(in) = a plastoquinol + NAD(+) + n H(+)(out)</text>
        <dbReference type="Rhea" id="RHEA:42608"/>
        <dbReference type="Rhea" id="RHEA-COMP:9561"/>
        <dbReference type="Rhea" id="RHEA-COMP:9562"/>
        <dbReference type="ChEBI" id="CHEBI:15378"/>
        <dbReference type="ChEBI" id="CHEBI:17757"/>
        <dbReference type="ChEBI" id="CHEBI:57540"/>
        <dbReference type="ChEBI" id="CHEBI:57945"/>
        <dbReference type="ChEBI" id="CHEBI:62192"/>
    </reaction>
</comment>
<comment type="catalytic activity">
    <reaction evidence="1">
        <text>a plastoquinone + NADPH + (n+1) H(+)(in) = a plastoquinol + NADP(+) + n H(+)(out)</text>
        <dbReference type="Rhea" id="RHEA:42612"/>
        <dbReference type="Rhea" id="RHEA-COMP:9561"/>
        <dbReference type="Rhea" id="RHEA-COMP:9562"/>
        <dbReference type="ChEBI" id="CHEBI:15378"/>
        <dbReference type="ChEBI" id="CHEBI:17757"/>
        <dbReference type="ChEBI" id="CHEBI:57783"/>
        <dbReference type="ChEBI" id="CHEBI:58349"/>
        <dbReference type="ChEBI" id="CHEBI:62192"/>
    </reaction>
</comment>
<comment type="subunit">
    <text evidence="1">NDH is composed of at least 16 different subunits, 5 of which are encoded in the nucleus.</text>
</comment>
<comment type="subcellular location">
    <subcellularLocation>
        <location evidence="1">Plastid</location>
        <location evidence="1">Chloroplast thylakoid membrane</location>
        <topology evidence="1">Multi-pass membrane protein</topology>
    </subcellularLocation>
</comment>
<comment type="similarity">
    <text evidence="1">Belongs to the complex I subunit 3 family.</text>
</comment>
<organism>
    <name type="scientific">Amborella trichopoda</name>
    <dbReference type="NCBI Taxonomy" id="13333"/>
    <lineage>
        <taxon>Eukaryota</taxon>
        <taxon>Viridiplantae</taxon>
        <taxon>Streptophyta</taxon>
        <taxon>Embryophyta</taxon>
        <taxon>Tracheophyta</taxon>
        <taxon>Spermatophyta</taxon>
        <taxon>Magnoliopsida</taxon>
        <taxon>Amborellales</taxon>
        <taxon>Amborellaceae</taxon>
        <taxon>Amborella</taxon>
    </lineage>
</organism>
<feature type="chain" id="PRO_0000362806" description="NAD(P)H-quinone oxidoreductase subunit 3, chloroplastic">
    <location>
        <begin position="1"/>
        <end position="120"/>
    </location>
</feature>
<feature type="transmembrane region" description="Helical" evidence="1">
    <location>
        <begin position="9"/>
        <end position="29"/>
    </location>
</feature>
<feature type="transmembrane region" description="Helical" evidence="1">
    <location>
        <begin position="64"/>
        <end position="84"/>
    </location>
</feature>
<feature type="transmembrane region" description="Helical" evidence="1">
    <location>
        <begin position="88"/>
        <end position="108"/>
    </location>
</feature>
<sequence length="120" mass="13730">MFLLHEYDIFWAFLMISSVIPILAFLISGVLAPISQGPEKVSSYESGIEPMGDAWIQFRIRYYMFALVFVVFDVETVFLYPWAMSFDVLGVSVFIEALIFVLIPIVGSVYAWRKGALEWS</sequence>